<organism>
    <name type="scientific">Nitrosomonas eutropha (strain DSM 101675 / C91 / Nm57)</name>
    <dbReference type="NCBI Taxonomy" id="335283"/>
    <lineage>
        <taxon>Bacteria</taxon>
        <taxon>Pseudomonadati</taxon>
        <taxon>Pseudomonadota</taxon>
        <taxon>Betaproteobacteria</taxon>
        <taxon>Nitrosomonadales</taxon>
        <taxon>Nitrosomonadaceae</taxon>
        <taxon>Nitrosomonas</taxon>
    </lineage>
</organism>
<proteinExistence type="inferred from homology"/>
<protein>
    <recommendedName>
        <fullName evidence="1">RNA-binding protein Hfq</fullName>
    </recommendedName>
</protein>
<comment type="function">
    <text evidence="1">RNA chaperone that binds small regulatory RNA (sRNAs) and mRNAs to facilitate mRNA translational regulation in response to envelope stress, environmental stress and changes in metabolite concentrations. Also binds with high specificity to tRNAs.</text>
</comment>
<comment type="subunit">
    <text evidence="1">Homohexamer.</text>
</comment>
<comment type="similarity">
    <text evidence="1">Belongs to the Hfq family.</text>
</comment>
<keyword id="KW-0694">RNA-binding</keyword>
<keyword id="KW-0346">Stress response</keyword>
<name>HFQ_NITEC</name>
<dbReference type="EMBL" id="CP000450">
    <property type="protein sequence ID" value="ABI59221.1"/>
    <property type="molecule type" value="Genomic_DNA"/>
</dbReference>
<dbReference type="RefSeq" id="WP_011634045.1">
    <property type="nucleotide sequence ID" value="NC_008344.1"/>
</dbReference>
<dbReference type="SMR" id="Q0AHG1"/>
<dbReference type="STRING" id="335283.Neut_0961"/>
<dbReference type="KEGG" id="net:Neut_0961"/>
<dbReference type="eggNOG" id="COG1923">
    <property type="taxonomic scope" value="Bacteria"/>
</dbReference>
<dbReference type="HOGENOM" id="CLU_113688_2_2_4"/>
<dbReference type="OrthoDB" id="9799751at2"/>
<dbReference type="Proteomes" id="UP000001966">
    <property type="component" value="Chromosome"/>
</dbReference>
<dbReference type="GO" id="GO:0005829">
    <property type="term" value="C:cytosol"/>
    <property type="evidence" value="ECO:0007669"/>
    <property type="project" value="TreeGrafter"/>
</dbReference>
<dbReference type="GO" id="GO:0003723">
    <property type="term" value="F:RNA binding"/>
    <property type="evidence" value="ECO:0007669"/>
    <property type="project" value="UniProtKB-UniRule"/>
</dbReference>
<dbReference type="GO" id="GO:0006355">
    <property type="term" value="P:regulation of DNA-templated transcription"/>
    <property type="evidence" value="ECO:0007669"/>
    <property type="project" value="InterPro"/>
</dbReference>
<dbReference type="GO" id="GO:0043487">
    <property type="term" value="P:regulation of RNA stability"/>
    <property type="evidence" value="ECO:0007669"/>
    <property type="project" value="TreeGrafter"/>
</dbReference>
<dbReference type="GO" id="GO:0045974">
    <property type="term" value="P:regulation of translation, ncRNA-mediated"/>
    <property type="evidence" value="ECO:0007669"/>
    <property type="project" value="TreeGrafter"/>
</dbReference>
<dbReference type="CDD" id="cd01716">
    <property type="entry name" value="Hfq"/>
    <property type="match status" value="1"/>
</dbReference>
<dbReference type="FunFam" id="2.30.30.100:FF:000001">
    <property type="entry name" value="RNA-binding protein Hfq"/>
    <property type="match status" value="1"/>
</dbReference>
<dbReference type="Gene3D" id="2.30.30.100">
    <property type="match status" value="1"/>
</dbReference>
<dbReference type="HAMAP" id="MF_00436">
    <property type="entry name" value="Hfq"/>
    <property type="match status" value="1"/>
</dbReference>
<dbReference type="InterPro" id="IPR005001">
    <property type="entry name" value="Hfq"/>
</dbReference>
<dbReference type="InterPro" id="IPR010920">
    <property type="entry name" value="LSM_dom_sf"/>
</dbReference>
<dbReference type="InterPro" id="IPR047575">
    <property type="entry name" value="Sm"/>
</dbReference>
<dbReference type="NCBIfam" id="TIGR02383">
    <property type="entry name" value="Hfq"/>
    <property type="match status" value="1"/>
</dbReference>
<dbReference type="NCBIfam" id="NF001602">
    <property type="entry name" value="PRK00395.1"/>
    <property type="match status" value="1"/>
</dbReference>
<dbReference type="PANTHER" id="PTHR34772">
    <property type="entry name" value="RNA-BINDING PROTEIN HFQ"/>
    <property type="match status" value="1"/>
</dbReference>
<dbReference type="PANTHER" id="PTHR34772:SF1">
    <property type="entry name" value="RNA-BINDING PROTEIN HFQ"/>
    <property type="match status" value="1"/>
</dbReference>
<dbReference type="Pfam" id="PF17209">
    <property type="entry name" value="Hfq"/>
    <property type="match status" value="1"/>
</dbReference>
<dbReference type="SUPFAM" id="SSF50182">
    <property type="entry name" value="Sm-like ribonucleoproteins"/>
    <property type="match status" value="1"/>
</dbReference>
<dbReference type="PROSITE" id="PS52002">
    <property type="entry name" value="SM"/>
    <property type="match status" value="1"/>
</dbReference>
<reference key="1">
    <citation type="journal article" date="2007" name="Environ. Microbiol.">
        <title>Whole-genome analysis of the ammonia-oxidizing bacterium, Nitrosomonas eutropha C91: implications for niche adaptation.</title>
        <authorList>
            <person name="Stein L.Y."/>
            <person name="Arp D.J."/>
            <person name="Berube P.M."/>
            <person name="Chain P.S."/>
            <person name="Hauser L."/>
            <person name="Jetten M.S."/>
            <person name="Klotz M.G."/>
            <person name="Larimer F.W."/>
            <person name="Norton J.M."/>
            <person name="Op den Camp H.J.M."/>
            <person name="Shin M."/>
            <person name="Wei X."/>
        </authorList>
    </citation>
    <scope>NUCLEOTIDE SEQUENCE [LARGE SCALE GENOMIC DNA]</scope>
    <source>
        <strain>DSM 101675 / C91 / Nm57</strain>
    </source>
</reference>
<evidence type="ECO:0000255" key="1">
    <source>
        <dbReference type="HAMAP-Rule" id="MF_00436"/>
    </source>
</evidence>
<evidence type="ECO:0000255" key="2">
    <source>
        <dbReference type="PROSITE-ProRule" id="PRU01346"/>
    </source>
</evidence>
<sequence>MGVKGQLLQDPFLNVLRKEHIPVSIYLVNGIKLQGHIDSFDQYVVLLRNSVTQMVYKHAISTIVPGKAVSIPVPAETLPE</sequence>
<feature type="chain" id="PRO_1000025922" description="RNA-binding protein Hfq">
    <location>
        <begin position="1"/>
        <end position="80"/>
    </location>
</feature>
<feature type="domain" description="Sm" evidence="2">
    <location>
        <begin position="10"/>
        <end position="69"/>
    </location>
</feature>
<gene>
    <name evidence="1" type="primary">hfq</name>
    <name type="ordered locus">Neut_0961</name>
</gene>
<accession>Q0AHG1</accession>